<organism>
    <name type="scientific">Spinacia oleracea</name>
    <name type="common">Spinach</name>
    <dbReference type="NCBI Taxonomy" id="3562"/>
    <lineage>
        <taxon>Eukaryota</taxon>
        <taxon>Viridiplantae</taxon>
        <taxon>Streptophyta</taxon>
        <taxon>Embryophyta</taxon>
        <taxon>Tracheophyta</taxon>
        <taxon>Spermatophyta</taxon>
        <taxon>Magnoliopsida</taxon>
        <taxon>eudicotyledons</taxon>
        <taxon>Gunneridae</taxon>
        <taxon>Pentapetalae</taxon>
        <taxon>Caryophyllales</taxon>
        <taxon>Chenopodiaceae</taxon>
        <taxon>Chenopodioideae</taxon>
        <taxon>Anserineae</taxon>
        <taxon>Spinacia</taxon>
    </lineage>
</organism>
<proteinExistence type="evidence at protein level"/>
<accession>P81778</accession>
<protein>
    <recommendedName>
        <fullName>Thylakoid lumenal 17.4 kDa protein</fullName>
    </recommendedName>
    <alternativeName>
        <fullName>P17.4</fullName>
    </alternativeName>
</protein>
<reference key="1">
    <citation type="journal article" date="2002" name="J. Biol. Chem.">
        <title>Proteome map of the chloroplast lumen of Arabidopsis thaliana.</title>
        <authorList>
            <person name="Schubert M."/>
            <person name="Petersson U.A."/>
            <person name="Haas B.J."/>
            <person name="Funk C."/>
            <person name="Schroeder W.P."/>
            <person name="Kieselbach T."/>
        </authorList>
    </citation>
    <scope>PROTEIN SEQUENCE</scope>
    <scope>SEQUENCE REVISION TO 13 AND 15</scope>
    <scope>SUBCELLULAR LOCATION</scope>
</reference>
<reference key="2">
    <citation type="journal article" date="1998" name="J. Biol. Chem.">
        <title>The thylakoid lumen of chloroplasts. Isolation and characterization.</title>
        <authorList>
            <person name="Kieselbach T."/>
            <person name="Hagman A."/>
            <person name="Andersson B."/>
            <person name="Schroeder W.P."/>
        </authorList>
    </citation>
    <scope>PROTEIN SEQUENCE OF 1-16</scope>
    <source>
        <tissue>Leaf</tissue>
    </source>
</reference>
<sequence length="23" mass="2571">ANQRLPPLSNDPDRCERAFVGNT</sequence>
<evidence type="ECO:0000256" key="1">
    <source>
        <dbReference type="SAM" id="MobiDB-lite"/>
    </source>
</evidence>
<evidence type="ECO:0000269" key="2">
    <source>
    </source>
</evidence>
<dbReference type="Proteomes" id="UP001155700">
    <property type="component" value="Unplaced"/>
</dbReference>
<dbReference type="GO" id="GO:0009543">
    <property type="term" value="C:chloroplast thylakoid lumen"/>
    <property type="evidence" value="ECO:0007669"/>
    <property type="project" value="UniProtKB-SubCell"/>
</dbReference>
<keyword id="KW-0150">Chloroplast</keyword>
<keyword id="KW-0903">Direct protein sequencing</keyword>
<keyword id="KW-0934">Plastid</keyword>
<keyword id="KW-1185">Reference proteome</keyword>
<keyword id="KW-0793">Thylakoid</keyword>
<comment type="subcellular location">
    <subcellularLocation>
        <location evidence="2">Plastid</location>
        <location evidence="2">Chloroplast thylakoid lumen</location>
    </subcellularLocation>
</comment>
<name>TL17_SPIOL</name>
<feature type="chain" id="PRO_0000217679" description="Thylakoid lumenal 17.4 kDa protein">
    <location>
        <begin position="1"/>
        <end position="23" status="greater than"/>
    </location>
</feature>
<feature type="region of interest" description="Disordered" evidence="1">
    <location>
        <begin position="1"/>
        <end position="23"/>
    </location>
</feature>
<feature type="non-terminal residue">
    <location>
        <position position="23"/>
    </location>
</feature>